<gene>
    <name type="primary">PSF3</name>
    <name type="ordered locus">KLLA0E01892g</name>
</gene>
<keyword id="KW-0235">DNA replication</keyword>
<keyword id="KW-0539">Nucleus</keyword>
<keyword id="KW-1185">Reference proteome</keyword>
<evidence type="ECO:0000250" key="1"/>
<evidence type="ECO:0000305" key="2"/>
<organism>
    <name type="scientific">Kluyveromyces lactis (strain ATCC 8585 / CBS 2359 / DSM 70799 / NBRC 1267 / NRRL Y-1140 / WM37)</name>
    <name type="common">Yeast</name>
    <name type="synonym">Candida sphaerica</name>
    <dbReference type="NCBI Taxonomy" id="284590"/>
    <lineage>
        <taxon>Eukaryota</taxon>
        <taxon>Fungi</taxon>
        <taxon>Dikarya</taxon>
        <taxon>Ascomycota</taxon>
        <taxon>Saccharomycotina</taxon>
        <taxon>Saccharomycetes</taxon>
        <taxon>Saccharomycetales</taxon>
        <taxon>Saccharomycetaceae</taxon>
        <taxon>Kluyveromyces</taxon>
    </lineage>
</organism>
<reference key="1">
    <citation type="journal article" date="2004" name="Nature">
        <title>Genome evolution in yeasts.</title>
        <authorList>
            <person name="Dujon B."/>
            <person name="Sherman D."/>
            <person name="Fischer G."/>
            <person name="Durrens P."/>
            <person name="Casaregola S."/>
            <person name="Lafontaine I."/>
            <person name="de Montigny J."/>
            <person name="Marck C."/>
            <person name="Neuveglise C."/>
            <person name="Talla E."/>
            <person name="Goffard N."/>
            <person name="Frangeul L."/>
            <person name="Aigle M."/>
            <person name="Anthouard V."/>
            <person name="Babour A."/>
            <person name="Barbe V."/>
            <person name="Barnay S."/>
            <person name="Blanchin S."/>
            <person name="Beckerich J.-M."/>
            <person name="Beyne E."/>
            <person name="Bleykasten C."/>
            <person name="Boisrame A."/>
            <person name="Boyer J."/>
            <person name="Cattolico L."/>
            <person name="Confanioleri F."/>
            <person name="de Daruvar A."/>
            <person name="Despons L."/>
            <person name="Fabre E."/>
            <person name="Fairhead C."/>
            <person name="Ferry-Dumazet H."/>
            <person name="Groppi A."/>
            <person name="Hantraye F."/>
            <person name="Hennequin C."/>
            <person name="Jauniaux N."/>
            <person name="Joyet P."/>
            <person name="Kachouri R."/>
            <person name="Kerrest A."/>
            <person name="Koszul R."/>
            <person name="Lemaire M."/>
            <person name="Lesur I."/>
            <person name="Ma L."/>
            <person name="Muller H."/>
            <person name="Nicaud J.-M."/>
            <person name="Nikolski M."/>
            <person name="Oztas S."/>
            <person name="Ozier-Kalogeropoulos O."/>
            <person name="Pellenz S."/>
            <person name="Potier S."/>
            <person name="Richard G.-F."/>
            <person name="Straub M.-L."/>
            <person name="Suleau A."/>
            <person name="Swennen D."/>
            <person name="Tekaia F."/>
            <person name="Wesolowski-Louvel M."/>
            <person name="Westhof E."/>
            <person name="Wirth B."/>
            <person name="Zeniou-Meyer M."/>
            <person name="Zivanovic Y."/>
            <person name="Bolotin-Fukuhara M."/>
            <person name="Thierry A."/>
            <person name="Bouchier C."/>
            <person name="Caudron B."/>
            <person name="Scarpelli C."/>
            <person name="Gaillardin C."/>
            <person name="Weissenbach J."/>
            <person name="Wincker P."/>
            <person name="Souciet J.-L."/>
        </authorList>
    </citation>
    <scope>NUCLEOTIDE SEQUENCE [LARGE SCALE GENOMIC DNA]</scope>
    <source>
        <strain>ATCC 8585 / CBS 2359 / DSM 70799 / NBRC 1267 / NRRL Y-1140 / WM37</strain>
    </source>
</reference>
<sequence>MGYYDIDDILADGTRFPCRFNYDVPGLGYLEGNPGRPISKNAKLELPLWMVHLLAVVGAQSNEDSRVEEPLPFVELLPPDLFAPRVLNAIKSGATSLDLHSISPHFYTLAEKWATLFSDKELSQVLKDMLLERGQEINNHAISVSMFSNCNQTNDSAVFLQTLDEFEKTIYRDTNVNCKEMKKWLVLK</sequence>
<comment type="function">
    <text evidence="1">The GINS complex plays an essential role in the initiation of DNA replication.</text>
</comment>
<comment type="subunit">
    <text evidence="1">Component of the GINS complex which is a heterotetramer of SLD5, PSF1, PSF2 and PSF3.</text>
</comment>
<comment type="subcellular location">
    <subcellularLocation>
        <location evidence="1">Nucleus</location>
    </subcellularLocation>
</comment>
<comment type="similarity">
    <text evidence="2">Belongs to the GINS3/PSF3 family.</text>
</comment>
<dbReference type="EMBL" id="CR382125">
    <property type="protein sequence ID" value="CAG99120.1"/>
    <property type="molecule type" value="Genomic_DNA"/>
</dbReference>
<dbReference type="RefSeq" id="XP_454033.1">
    <property type="nucleotide sequence ID" value="XM_454033.1"/>
</dbReference>
<dbReference type="SMR" id="Q6CPV6"/>
<dbReference type="FunCoup" id="Q6CPV6">
    <property type="interactions" value="423"/>
</dbReference>
<dbReference type="STRING" id="284590.Q6CPV6"/>
<dbReference type="PaxDb" id="284590-Q6CPV6"/>
<dbReference type="KEGG" id="kla:KLLA0_E01893g"/>
<dbReference type="eggNOG" id="KOG1106">
    <property type="taxonomic scope" value="Eukaryota"/>
</dbReference>
<dbReference type="HOGENOM" id="CLU_081646_0_1_1"/>
<dbReference type="InParanoid" id="Q6CPV6"/>
<dbReference type="OMA" id="IYKEGWR"/>
<dbReference type="Proteomes" id="UP000000598">
    <property type="component" value="Chromosome E"/>
</dbReference>
<dbReference type="GO" id="GO:0000811">
    <property type="term" value="C:GINS complex"/>
    <property type="evidence" value="ECO:0007669"/>
    <property type="project" value="TreeGrafter"/>
</dbReference>
<dbReference type="GO" id="GO:1902975">
    <property type="term" value="P:mitotic DNA replication initiation"/>
    <property type="evidence" value="ECO:0007669"/>
    <property type="project" value="TreeGrafter"/>
</dbReference>
<dbReference type="CDD" id="cd11713">
    <property type="entry name" value="GINS_A_psf3"/>
    <property type="match status" value="1"/>
</dbReference>
<dbReference type="CDD" id="cd21693">
    <property type="entry name" value="GINS_B_Psf3"/>
    <property type="match status" value="1"/>
</dbReference>
<dbReference type="Gene3D" id="1.20.58.2050">
    <property type="match status" value="1"/>
</dbReference>
<dbReference type="InterPro" id="IPR021151">
    <property type="entry name" value="GINS_A"/>
</dbReference>
<dbReference type="InterPro" id="IPR036224">
    <property type="entry name" value="GINS_bundle-like_dom_sf"/>
</dbReference>
<dbReference type="InterPro" id="IPR010492">
    <property type="entry name" value="GINS_Psf3"/>
</dbReference>
<dbReference type="InterPro" id="IPR038437">
    <property type="entry name" value="GINS_Psf3_sf"/>
</dbReference>
<dbReference type="InterPro" id="IPR055221">
    <property type="entry name" value="PSF3_N"/>
</dbReference>
<dbReference type="PANTHER" id="PTHR22768">
    <property type="entry name" value="DNA REPLICATION COMPLEX GINS PROTEIN PSF3"/>
    <property type="match status" value="1"/>
</dbReference>
<dbReference type="PANTHER" id="PTHR22768:SF0">
    <property type="entry name" value="DNA REPLICATION COMPLEX GINS PROTEIN PSF3"/>
    <property type="match status" value="1"/>
</dbReference>
<dbReference type="Pfam" id="PF22466">
    <property type="entry name" value="PSF3_N"/>
    <property type="match status" value="1"/>
</dbReference>
<dbReference type="Pfam" id="PF05916">
    <property type="entry name" value="Sld5"/>
    <property type="match status" value="1"/>
</dbReference>
<dbReference type="SUPFAM" id="SSF158573">
    <property type="entry name" value="GINS helical bundle-like"/>
    <property type="match status" value="1"/>
</dbReference>
<dbReference type="SUPFAM" id="SSF160059">
    <property type="entry name" value="PriA/YqbF domain"/>
    <property type="match status" value="1"/>
</dbReference>
<protein>
    <recommendedName>
        <fullName>DNA replication complex GINS protein PSF3</fullName>
    </recommendedName>
</protein>
<feature type="chain" id="PRO_0000278424" description="DNA replication complex GINS protein PSF3">
    <location>
        <begin position="1"/>
        <end position="188"/>
    </location>
</feature>
<proteinExistence type="inferred from homology"/>
<accession>Q6CPV6</accession>
<name>PSF3_KLULA</name>